<reference key="1">
    <citation type="book" date="2006" name="Gram positive pathogens, 2nd edition">
        <title>The Staphylococcus aureus NCTC 8325 genome.</title>
        <editorList>
            <person name="Fischetti V."/>
            <person name="Novick R."/>
            <person name="Ferretti J."/>
            <person name="Portnoy D."/>
            <person name="Rood J."/>
        </editorList>
        <authorList>
            <person name="Gillaspy A.F."/>
            <person name="Worrell V."/>
            <person name="Orvis J."/>
            <person name="Roe B.A."/>
            <person name="Dyer D.W."/>
            <person name="Iandolo J.J."/>
        </authorList>
    </citation>
    <scope>NUCLEOTIDE SEQUENCE [LARGE SCALE GENOMIC DNA]</scope>
    <source>
        <strain>NCTC 8325 / PS 47</strain>
    </source>
</reference>
<proteinExistence type="evidence at protein level"/>
<protein>
    <recommendedName>
        <fullName evidence="2">D-alanine--D-alanine ligase</fullName>
        <ecNumber evidence="2">6.3.2.4</ecNumber>
    </recommendedName>
    <alternativeName>
        <fullName evidence="2">D-Ala-D-Ala ligase</fullName>
    </alternativeName>
    <alternativeName>
        <fullName evidence="2">D-alanylalanine synthetase</fullName>
    </alternativeName>
</protein>
<dbReference type="EC" id="6.3.2.4" evidence="2"/>
<dbReference type="EMBL" id="CP000253">
    <property type="protein sequence ID" value="ABD31352.1"/>
    <property type="molecule type" value="Genomic_DNA"/>
</dbReference>
<dbReference type="RefSeq" id="WP_000159631.1">
    <property type="nucleotide sequence ID" value="NZ_LS483365.1"/>
</dbReference>
<dbReference type="RefSeq" id="YP_500797.1">
    <property type="nucleotide sequence ID" value="NC_007795.1"/>
</dbReference>
<dbReference type="PDB" id="7U9K">
    <property type="method" value="X-ray"/>
    <property type="resolution" value="2.00 A"/>
    <property type="chains" value="A/B=1-356"/>
</dbReference>
<dbReference type="PDBsum" id="7U9K"/>
<dbReference type="SMR" id="Q2FWH3"/>
<dbReference type="STRING" id="93061.SAOUHSC_02318"/>
<dbReference type="PaxDb" id="1280-SAXN108_2328"/>
<dbReference type="GeneID" id="3920943"/>
<dbReference type="KEGG" id="sao:SAOUHSC_02318"/>
<dbReference type="PATRIC" id="fig|93061.5.peg.2101"/>
<dbReference type="eggNOG" id="COG1181">
    <property type="taxonomic scope" value="Bacteria"/>
</dbReference>
<dbReference type="HOGENOM" id="CLU_039268_0_0_9"/>
<dbReference type="OrthoDB" id="9813261at2"/>
<dbReference type="UniPathway" id="UPA00219"/>
<dbReference type="PRO" id="PR:Q2FWH3"/>
<dbReference type="Proteomes" id="UP000008816">
    <property type="component" value="Chromosome"/>
</dbReference>
<dbReference type="GO" id="GO:0005829">
    <property type="term" value="C:cytosol"/>
    <property type="evidence" value="ECO:0000318"/>
    <property type="project" value="GO_Central"/>
</dbReference>
<dbReference type="GO" id="GO:0005524">
    <property type="term" value="F:ATP binding"/>
    <property type="evidence" value="ECO:0007669"/>
    <property type="project" value="UniProtKB-KW"/>
</dbReference>
<dbReference type="GO" id="GO:0008716">
    <property type="term" value="F:D-alanine-D-alanine ligase activity"/>
    <property type="evidence" value="ECO:0000318"/>
    <property type="project" value="GO_Central"/>
</dbReference>
<dbReference type="GO" id="GO:0046872">
    <property type="term" value="F:metal ion binding"/>
    <property type="evidence" value="ECO:0007669"/>
    <property type="project" value="UniProtKB-KW"/>
</dbReference>
<dbReference type="GO" id="GO:0071555">
    <property type="term" value="P:cell wall organization"/>
    <property type="evidence" value="ECO:0007669"/>
    <property type="project" value="UniProtKB-KW"/>
</dbReference>
<dbReference type="GO" id="GO:0009252">
    <property type="term" value="P:peptidoglycan biosynthetic process"/>
    <property type="evidence" value="ECO:0000318"/>
    <property type="project" value="GO_Central"/>
</dbReference>
<dbReference type="GO" id="GO:0008360">
    <property type="term" value="P:regulation of cell shape"/>
    <property type="evidence" value="ECO:0007669"/>
    <property type="project" value="UniProtKB-KW"/>
</dbReference>
<dbReference type="FunFam" id="3.30.1490.20:FF:000007">
    <property type="entry name" value="D-alanine--D-alanine ligase"/>
    <property type="match status" value="1"/>
</dbReference>
<dbReference type="FunFam" id="3.30.470.20:FF:000008">
    <property type="entry name" value="D-alanine--D-alanine ligase"/>
    <property type="match status" value="1"/>
</dbReference>
<dbReference type="FunFam" id="3.40.50.20:FF:000020">
    <property type="entry name" value="D-alanine--D-alanine ligase"/>
    <property type="match status" value="1"/>
</dbReference>
<dbReference type="Gene3D" id="3.40.50.20">
    <property type="match status" value="1"/>
</dbReference>
<dbReference type="Gene3D" id="3.30.1490.20">
    <property type="entry name" value="ATP-grasp fold, A domain"/>
    <property type="match status" value="1"/>
</dbReference>
<dbReference type="Gene3D" id="3.30.470.20">
    <property type="entry name" value="ATP-grasp fold, B domain"/>
    <property type="match status" value="1"/>
</dbReference>
<dbReference type="HAMAP" id="MF_00047">
    <property type="entry name" value="Dala_Dala_lig"/>
    <property type="match status" value="1"/>
</dbReference>
<dbReference type="InterPro" id="IPR011761">
    <property type="entry name" value="ATP-grasp"/>
</dbReference>
<dbReference type="InterPro" id="IPR013815">
    <property type="entry name" value="ATP_grasp_subdomain_1"/>
</dbReference>
<dbReference type="InterPro" id="IPR000291">
    <property type="entry name" value="D-Ala_lig_Van_CS"/>
</dbReference>
<dbReference type="InterPro" id="IPR005905">
    <property type="entry name" value="D_ala_D_ala"/>
</dbReference>
<dbReference type="InterPro" id="IPR011095">
    <property type="entry name" value="Dala_Dala_lig_C"/>
</dbReference>
<dbReference type="InterPro" id="IPR011127">
    <property type="entry name" value="Dala_Dala_lig_N"/>
</dbReference>
<dbReference type="InterPro" id="IPR016185">
    <property type="entry name" value="PreATP-grasp_dom_sf"/>
</dbReference>
<dbReference type="NCBIfam" id="TIGR01205">
    <property type="entry name" value="D_ala_D_alaTIGR"/>
    <property type="match status" value="1"/>
</dbReference>
<dbReference type="NCBIfam" id="NF002526">
    <property type="entry name" value="PRK01966.1-2"/>
    <property type="match status" value="1"/>
</dbReference>
<dbReference type="NCBIfam" id="NF002528">
    <property type="entry name" value="PRK01966.1-4"/>
    <property type="match status" value="1"/>
</dbReference>
<dbReference type="PANTHER" id="PTHR23132">
    <property type="entry name" value="D-ALANINE--D-ALANINE LIGASE"/>
    <property type="match status" value="1"/>
</dbReference>
<dbReference type="PANTHER" id="PTHR23132:SF25">
    <property type="entry name" value="D-ALANINE--D-ALANINE LIGASE A"/>
    <property type="match status" value="1"/>
</dbReference>
<dbReference type="Pfam" id="PF07478">
    <property type="entry name" value="Dala_Dala_lig_C"/>
    <property type="match status" value="1"/>
</dbReference>
<dbReference type="Pfam" id="PF01820">
    <property type="entry name" value="Dala_Dala_lig_N"/>
    <property type="match status" value="1"/>
</dbReference>
<dbReference type="PIRSF" id="PIRSF039102">
    <property type="entry name" value="Ddl/VanB"/>
    <property type="match status" value="1"/>
</dbReference>
<dbReference type="SUPFAM" id="SSF56059">
    <property type="entry name" value="Glutathione synthetase ATP-binding domain-like"/>
    <property type="match status" value="1"/>
</dbReference>
<dbReference type="SUPFAM" id="SSF52440">
    <property type="entry name" value="PreATP-grasp domain"/>
    <property type="match status" value="1"/>
</dbReference>
<dbReference type="PROSITE" id="PS50975">
    <property type="entry name" value="ATP_GRASP"/>
    <property type="match status" value="1"/>
</dbReference>
<dbReference type="PROSITE" id="PS00843">
    <property type="entry name" value="DALA_DALA_LIGASE_1"/>
    <property type="match status" value="1"/>
</dbReference>
<dbReference type="PROSITE" id="PS00844">
    <property type="entry name" value="DALA_DALA_LIGASE_2"/>
    <property type="match status" value="1"/>
</dbReference>
<comment type="function">
    <text evidence="2">Cell wall formation.</text>
</comment>
<comment type="catalytic activity">
    <reaction evidence="2">
        <text>2 D-alanine + ATP = D-alanyl-D-alanine + ADP + phosphate + H(+)</text>
        <dbReference type="Rhea" id="RHEA:11224"/>
        <dbReference type="ChEBI" id="CHEBI:15378"/>
        <dbReference type="ChEBI" id="CHEBI:30616"/>
        <dbReference type="ChEBI" id="CHEBI:43474"/>
        <dbReference type="ChEBI" id="CHEBI:57416"/>
        <dbReference type="ChEBI" id="CHEBI:57822"/>
        <dbReference type="ChEBI" id="CHEBI:456216"/>
        <dbReference type="EC" id="6.3.2.4"/>
    </reaction>
</comment>
<comment type="cofactor">
    <cofactor evidence="1">
        <name>Mg(2+)</name>
        <dbReference type="ChEBI" id="CHEBI:18420"/>
    </cofactor>
    <cofactor evidence="1">
        <name>Mn(2+)</name>
        <dbReference type="ChEBI" id="CHEBI:29035"/>
    </cofactor>
    <text evidence="1">Binds 2 magnesium or manganese ions per subunit.</text>
</comment>
<comment type="pathway">
    <text evidence="2">Cell wall biogenesis; peptidoglycan biosynthesis.</text>
</comment>
<comment type="subcellular location">
    <subcellularLocation>
        <location evidence="2">Cytoplasm</location>
    </subcellularLocation>
</comment>
<comment type="similarity">
    <text evidence="2">Belongs to the D-alanine--D-alanine ligase family.</text>
</comment>
<organism>
    <name type="scientific">Staphylococcus aureus (strain NCTC 8325 / PS 47)</name>
    <dbReference type="NCBI Taxonomy" id="93061"/>
    <lineage>
        <taxon>Bacteria</taxon>
        <taxon>Bacillati</taxon>
        <taxon>Bacillota</taxon>
        <taxon>Bacilli</taxon>
        <taxon>Bacillales</taxon>
        <taxon>Staphylococcaceae</taxon>
        <taxon>Staphylococcus</taxon>
    </lineage>
</organism>
<gene>
    <name evidence="2" type="primary">ddl</name>
    <name type="ordered locus">SAOUHSC_02318</name>
</gene>
<feature type="chain" id="PRO_1000030494" description="D-alanine--D-alanine ligase">
    <location>
        <begin position="1"/>
        <end position="356"/>
    </location>
</feature>
<feature type="domain" description="ATP-grasp" evidence="2">
    <location>
        <begin position="134"/>
        <end position="339"/>
    </location>
</feature>
<feature type="binding site" evidence="2">
    <location>
        <begin position="167"/>
        <end position="222"/>
    </location>
    <ligand>
        <name>ATP</name>
        <dbReference type="ChEBI" id="CHEBI:30616"/>
    </ligand>
</feature>
<feature type="binding site" evidence="2">
    <location>
        <position position="293"/>
    </location>
    <ligand>
        <name>Mg(2+)</name>
        <dbReference type="ChEBI" id="CHEBI:18420"/>
        <label>1</label>
    </ligand>
</feature>
<feature type="binding site" evidence="2">
    <location>
        <position position="306"/>
    </location>
    <ligand>
        <name>Mg(2+)</name>
        <dbReference type="ChEBI" id="CHEBI:18420"/>
        <label>1</label>
    </ligand>
</feature>
<feature type="binding site" evidence="2">
    <location>
        <position position="306"/>
    </location>
    <ligand>
        <name>Mg(2+)</name>
        <dbReference type="ChEBI" id="CHEBI:18420"/>
        <label>2</label>
    </ligand>
</feature>
<feature type="binding site" evidence="2">
    <location>
        <position position="308"/>
    </location>
    <ligand>
        <name>Mg(2+)</name>
        <dbReference type="ChEBI" id="CHEBI:18420"/>
        <label>2</label>
    </ligand>
</feature>
<feature type="strand" evidence="3">
    <location>
        <begin position="4"/>
        <end position="11"/>
    </location>
</feature>
<feature type="helix" evidence="3">
    <location>
        <begin position="17"/>
        <end position="30"/>
    </location>
</feature>
<feature type="turn" evidence="3">
    <location>
        <begin position="33"/>
        <end position="35"/>
    </location>
</feature>
<feature type="strand" evidence="3">
    <location>
        <begin position="36"/>
        <end position="43"/>
    </location>
</feature>
<feature type="strand" evidence="3">
    <location>
        <begin position="49"/>
        <end position="52"/>
    </location>
</feature>
<feature type="helix" evidence="3">
    <location>
        <begin position="62"/>
        <end position="65"/>
    </location>
</feature>
<feature type="helix" evidence="3">
    <location>
        <begin position="75"/>
        <end position="80"/>
    </location>
</feature>
<feature type="strand" evidence="3">
    <location>
        <begin position="89"/>
        <end position="93"/>
    </location>
</feature>
<feature type="turn" evidence="3">
    <location>
        <begin position="98"/>
        <end position="100"/>
    </location>
</feature>
<feature type="strand" evidence="3">
    <location>
        <begin position="101"/>
        <end position="103"/>
    </location>
</feature>
<feature type="helix" evidence="3">
    <location>
        <begin position="104"/>
        <end position="112"/>
    </location>
</feature>
<feature type="strand" evidence="3">
    <location>
        <begin position="116"/>
        <end position="118"/>
    </location>
</feature>
<feature type="helix" evidence="3">
    <location>
        <begin position="121"/>
        <end position="128"/>
    </location>
</feature>
<feature type="helix" evidence="3">
    <location>
        <begin position="130"/>
        <end position="140"/>
    </location>
</feature>
<feature type="strand" evidence="3">
    <location>
        <begin position="147"/>
        <end position="151"/>
    </location>
</feature>
<feature type="helix" evidence="3">
    <location>
        <begin position="152"/>
        <end position="169"/>
    </location>
</feature>
<feature type="strand" evidence="3">
    <location>
        <begin position="172"/>
        <end position="180"/>
    </location>
</feature>
<feature type="strand" evidence="3">
    <location>
        <begin position="188"/>
        <end position="192"/>
    </location>
</feature>
<feature type="helix" evidence="3">
    <location>
        <begin position="193"/>
        <end position="204"/>
    </location>
</feature>
<feature type="strand" evidence="3">
    <location>
        <begin position="208"/>
        <end position="214"/>
    </location>
</feature>
<feature type="strand" evidence="3">
    <location>
        <begin position="219"/>
        <end position="230"/>
    </location>
</feature>
<feature type="strand" evidence="3">
    <location>
        <begin position="237"/>
        <end position="239"/>
    </location>
</feature>
<feature type="strand" evidence="3">
    <location>
        <begin position="242"/>
        <end position="245"/>
    </location>
</feature>
<feature type="helix" evidence="3">
    <location>
        <begin position="248"/>
        <end position="252"/>
    </location>
</feature>
<feature type="strand" evidence="3">
    <location>
        <begin position="259"/>
        <end position="262"/>
    </location>
</feature>
<feature type="helix" evidence="3">
    <location>
        <begin position="267"/>
        <end position="283"/>
    </location>
</feature>
<feature type="strand" evidence="3">
    <location>
        <begin position="288"/>
        <end position="296"/>
    </location>
</feature>
<feature type="strand" evidence="3">
    <location>
        <begin position="302"/>
        <end position="310"/>
    </location>
</feature>
<feature type="helix" evidence="3">
    <location>
        <begin position="318"/>
        <end position="325"/>
    </location>
</feature>
<feature type="helix" evidence="3">
    <location>
        <begin position="330"/>
        <end position="349"/>
    </location>
</feature>
<sequence length="356" mass="40231">MTKENICIVFGGKSAEHEVSILTAQNVLNAIDKDKYHVDIIYITNDGDWRKQNNITAEIKSTDELHLENGEALEISQLLKESSSGQPYDAVFPLLHGPNGEDGTIQGLFEVLDVPYVGNGVLSAASSMDKLVMKQLFEHRGLPQLPYISFLRSEYEKYEHNILKLVNDKLNYPVFVKPANLGSSVGISKCNNEAELKEGIKEAFQFDRKLVIEQGVNAREIEVAVLGNDYPEATWPGEVVKDVAFYDYKSKYKDGKVQLQIPADLDEDVQLTLRNMALEAFKATDCSGLVRADFFVTEDNQIYINETNAMPGFTAFSMYPKLWENMGLSYPELITKLIELAKERHQDKQKNKYKID</sequence>
<name>DDL_STAA8</name>
<accession>Q2FWH3</accession>
<keyword id="KW-0002">3D-structure</keyword>
<keyword id="KW-0067">ATP-binding</keyword>
<keyword id="KW-0133">Cell shape</keyword>
<keyword id="KW-0961">Cell wall biogenesis/degradation</keyword>
<keyword id="KW-0963">Cytoplasm</keyword>
<keyword id="KW-0436">Ligase</keyword>
<keyword id="KW-0460">Magnesium</keyword>
<keyword id="KW-0464">Manganese</keyword>
<keyword id="KW-0479">Metal-binding</keyword>
<keyword id="KW-0547">Nucleotide-binding</keyword>
<keyword id="KW-0573">Peptidoglycan synthesis</keyword>
<keyword id="KW-1185">Reference proteome</keyword>
<evidence type="ECO:0000250" key="1"/>
<evidence type="ECO:0000255" key="2">
    <source>
        <dbReference type="HAMAP-Rule" id="MF_00047"/>
    </source>
</evidence>
<evidence type="ECO:0007829" key="3">
    <source>
        <dbReference type="PDB" id="7U9K"/>
    </source>
</evidence>